<organism>
    <name type="scientific">Exiguobacterium sp. (strain ATCC BAA-1283 / AT1b)</name>
    <dbReference type="NCBI Taxonomy" id="360911"/>
    <lineage>
        <taxon>Bacteria</taxon>
        <taxon>Bacillati</taxon>
        <taxon>Bacillota</taxon>
        <taxon>Bacilli</taxon>
        <taxon>Bacillales</taxon>
        <taxon>Bacillales Family XII. Incertae Sedis</taxon>
        <taxon>Exiguobacterium</taxon>
    </lineage>
</organism>
<comment type="function">
    <text evidence="1">Catalyzes the interconversion of ornithine to glutamate semialdehyde.</text>
</comment>
<comment type="catalytic activity">
    <reaction evidence="1">
        <text>a 2-oxocarboxylate + L-ornithine = L-glutamate 5-semialdehyde + an L-alpha-amino acid</text>
        <dbReference type="Rhea" id="RHEA:13877"/>
        <dbReference type="ChEBI" id="CHEBI:35179"/>
        <dbReference type="ChEBI" id="CHEBI:46911"/>
        <dbReference type="ChEBI" id="CHEBI:58066"/>
        <dbReference type="ChEBI" id="CHEBI:59869"/>
        <dbReference type="EC" id="2.6.1.13"/>
    </reaction>
</comment>
<comment type="cofactor">
    <cofactor evidence="1">
        <name>pyridoxal 5'-phosphate</name>
        <dbReference type="ChEBI" id="CHEBI:597326"/>
    </cofactor>
</comment>
<comment type="pathway">
    <text evidence="1">Amino-acid biosynthesis; L-proline biosynthesis; L-glutamate 5-semialdehyde from L-ornithine: step 1/1.</text>
</comment>
<comment type="subcellular location">
    <subcellularLocation>
        <location evidence="1">Cytoplasm</location>
    </subcellularLocation>
</comment>
<comment type="similarity">
    <text evidence="1">Belongs to the class-III pyridoxal-phosphate-dependent aminotransferase family. OAT subfamily.</text>
</comment>
<keyword id="KW-0028">Amino-acid biosynthesis</keyword>
<keyword id="KW-0032">Aminotransferase</keyword>
<keyword id="KW-0963">Cytoplasm</keyword>
<keyword id="KW-0641">Proline biosynthesis</keyword>
<keyword id="KW-0663">Pyridoxal phosphate</keyword>
<keyword id="KW-0808">Transferase</keyword>
<proteinExistence type="inferred from homology"/>
<reference key="1">
    <citation type="journal article" date="2011" name="J. Bacteriol.">
        <title>Complete genome sequence of the Thermophilic Bacterium Exiguobacterium sp. AT1b.</title>
        <authorList>
            <person name="Vishnivetskaya T.A."/>
            <person name="Lucas S."/>
            <person name="Copeland A."/>
            <person name="Lapidus A."/>
            <person name="Glavina del Rio T."/>
            <person name="Dalin E."/>
            <person name="Tice H."/>
            <person name="Bruce D.C."/>
            <person name="Goodwin L.A."/>
            <person name="Pitluck S."/>
            <person name="Saunders E."/>
            <person name="Brettin T."/>
            <person name="Detter C."/>
            <person name="Han C."/>
            <person name="Larimer F."/>
            <person name="Land M.L."/>
            <person name="Hauser L.J."/>
            <person name="Kyrpides N.C."/>
            <person name="Ovchinnikova G."/>
            <person name="Kathariou S."/>
            <person name="Ramaley R.F."/>
            <person name="Rodrigues D.F."/>
            <person name="Hendrix C."/>
            <person name="Richardson P."/>
            <person name="Tiedje J.M."/>
        </authorList>
    </citation>
    <scope>NUCLEOTIDE SEQUENCE [LARGE SCALE GENOMIC DNA]</scope>
    <source>
        <strain>ATCC BAA-1283 / AT1b</strain>
    </source>
</reference>
<feature type="chain" id="PRO_1000215919" description="Ornithine aminotransferase">
    <location>
        <begin position="1"/>
        <end position="400"/>
    </location>
</feature>
<feature type="modified residue" description="N6-(pyridoxal phosphate)lysine" evidence="1">
    <location>
        <position position="254"/>
    </location>
</feature>
<protein>
    <recommendedName>
        <fullName evidence="1">Ornithine aminotransferase</fullName>
        <shortName evidence="1">OAT</shortName>
        <ecNumber evidence="1">2.6.1.13</ecNumber>
    </recommendedName>
    <alternativeName>
        <fullName evidence="1">Ornithine--oxo-acid aminotransferase</fullName>
    </alternativeName>
</protein>
<accession>C4L2E7</accession>
<gene>
    <name evidence="1" type="primary">rocD</name>
    <name type="ordered locus">EAT1b_2277</name>
</gene>
<dbReference type="EC" id="2.6.1.13" evidence="1"/>
<dbReference type="EMBL" id="CP001615">
    <property type="protein sequence ID" value="ACQ71199.1"/>
    <property type="molecule type" value="Genomic_DNA"/>
</dbReference>
<dbReference type="RefSeq" id="WP_015880758.1">
    <property type="nucleotide sequence ID" value="NC_012673.1"/>
</dbReference>
<dbReference type="SMR" id="C4L2E7"/>
<dbReference type="STRING" id="360911.EAT1b_2277"/>
<dbReference type="KEGG" id="eat:EAT1b_2277"/>
<dbReference type="eggNOG" id="COG4992">
    <property type="taxonomic scope" value="Bacteria"/>
</dbReference>
<dbReference type="HOGENOM" id="CLU_016922_10_3_9"/>
<dbReference type="OrthoDB" id="9807885at2"/>
<dbReference type="UniPathway" id="UPA00098">
    <property type="reaction ID" value="UER00358"/>
</dbReference>
<dbReference type="Proteomes" id="UP000000716">
    <property type="component" value="Chromosome"/>
</dbReference>
<dbReference type="GO" id="GO:0005737">
    <property type="term" value="C:cytoplasm"/>
    <property type="evidence" value="ECO:0007669"/>
    <property type="project" value="UniProtKB-SubCell"/>
</dbReference>
<dbReference type="GO" id="GO:0042802">
    <property type="term" value="F:identical protein binding"/>
    <property type="evidence" value="ECO:0007669"/>
    <property type="project" value="TreeGrafter"/>
</dbReference>
<dbReference type="GO" id="GO:0004587">
    <property type="term" value="F:ornithine aminotransferase activity"/>
    <property type="evidence" value="ECO:0007669"/>
    <property type="project" value="UniProtKB-UniRule"/>
</dbReference>
<dbReference type="GO" id="GO:0030170">
    <property type="term" value="F:pyridoxal phosphate binding"/>
    <property type="evidence" value="ECO:0007669"/>
    <property type="project" value="UniProtKB-UniRule"/>
</dbReference>
<dbReference type="GO" id="GO:0055129">
    <property type="term" value="P:L-proline biosynthetic process"/>
    <property type="evidence" value="ECO:0007669"/>
    <property type="project" value="UniProtKB-UniRule"/>
</dbReference>
<dbReference type="CDD" id="cd00610">
    <property type="entry name" value="OAT_like"/>
    <property type="match status" value="1"/>
</dbReference>
<dbReference type="FunFam" id="3.40.640.10:FF:000011">
    <property type="entry name" value="Ornithine aminotransferase"/>
    <property type="match status" value="1"/>
</dbReference>
<dbReference type="Gene3D" id="3.90.1150.10">
    <property type="entry name" value="Aspartate Aminotransferase, domain 1"/>
    <property type="match status" value="1"/>
</dbReference>
<dbReference type="Gene3D" id="3.40.640.10">
    <property type="entry name" value="Type I PLP-dependent aspartate aminotransferase-like (Major domain)"/>
    <property type="match status" value="1"/>
</dbReference>
<dbReference type="HAMAP" id="MF_01689">
    <property type="entry name" value="Ornith_aminotrans_3"/>
    <property type="match status" value="1"/>
</dbReference>
<dbReference type="InterPro" id="IPR005814">
    <property type="entry name" value="Aminotrans_3"/>
</dbReference>
<dbReference type="InterPro" id="IPR049704">
    <property type="entry name" value="Aminotrans_3_PPA_site"/>
</dbReference>
<dbReference type="InterPro" id="IPR050103">
    <property type="entry name" value="Class-III_PLP-dep_AT"/>
</dbReference>
<dbReference type="InterPro" id="IPR010164">
    <property type="entry name" value="Orn_aminotrans"/>
</dbReference>
<dbReference type="InterPro" id="IPR034757">
    <property type="entry name" value="Ornith_aminotrans_bact"/>
</dbReference>
<dbReference type="InterPro" id="IPR015424">
    <property type="entry name" value="PyrdxlP-dep_Trfase"/>
</dbReference>
<dbReference type="InterPro" id="IPR015421">
    <property type="entry name" value="PyrdxlP-dep_Trfase_major"/>
</dbReference>
<dbReference type="InterPro" id="IPR015422">
    <property type="entry name" value="PyrdxlP-dep_Trfase_small"/>
</dbReference>
<dbReference type="NCBIfam" id="TIGR01885">
    <property type="entry name" value="Orn_aminotrans"/>
    <property type="match status" value="1"/>
</dbReference>
<dbReference type="NCBIfam" id="NF003145">
    <property type="entry name" value="PRK04073.1"/>
    <property type="match status" value="1"/>
</dbReference>
<dbReference type="PANTHER" id="PTHR11986">
    <property type="entry name" value="AMINOTRANSFERASE CLASS III"/>
    <property type="match status" value="1"/>
</dbReference>
<dbReference type="PANTHER" id="PTHR11986:SF18">
    <property type="entry name" value="ORNITHINE AMINOTRANSFERASE, MITOCHONDRIAL"/>
    <property type="match status" value="1"/>
</dbReference>
<dbReference type="Pfam" id="PF00202">
    <property type="entry name" value="Aminotran_3"/>
    <property type="match status" value="1"/>
</dbReference>
<dbReference type="PIRSF" id="PIRSF000521">
    <property type="entry name" value="Transaminase_4ab_Lys_Orn"/>
    <property type="match status" value="1"/>
</dbReference>
<dbReference type="SUPFAM" id="SSF53383">
    <property type="entry name" value="PLP-dependent transferases"/>
    <property type="match status" value="1"/>
</dbReference>
<dbReference type="PROSITE" id="PS00600">
    <property type="entry name" value="AA_TRANSFER_CLASS_3"/>
    <property type="match status" value="1"/>
</dbReference>
<name>OAT_EXISA</name>
<evidence type="ECO:0000255" key="1">
    <source>
        <dbReference type="HAMAP-Rule" id="MF_01689"/>
    </source>
</evidence>
<sequence length="400" mass="43690">MSKTHDVIELTEKFGAHNYHPLPIVISEAKGIWVTDPEGNRYMDMLSAYSAVNQGHCHPKIIQALKDQADKITLTSRAFYNDQLGRFYDKVVTLTKKQMVLPMNTGAEAVETAVKTARRWAYDVKGIPGQAEIIVCSGNFHGRTMAAVSMSTEAEYQRGFGPLLPGFKVVPYGDIDAFEAAITENTAAFIVEPIQGEAGIIIPPAGYLKRASELCKEHNVLFVADEIQSGLGRSGKWFAIEWEDVTPDMYILGKALGGGVFPISCVAADQEILSVFNPGSHGSTFGGNPLASAVSVAALEVLEEENLPERSLELGTYFMDRLKSIDNPMIRDVRGRGLFIGIELTESARPYCEALKERGLLCKETHETVIRLAPPLVITKEELDQAFEAIEAVLAPAAIS</sequence>